<dbReference type="EMBL" id="AE005174">
    <property type="protein sequence ID" value="AAG57834.1"/>
    <property type="molecule type" value="Genomic_DNA"/>
</dbReference>
<dbReference type="EMBL" id="BA000007">
    <property type="protein sequence ID" value="BAB37005.1"/>
    <property type="molecule type" value="Genomic_DNA"/>
</dbReference>
<dbReference type="PIR" id="F85921">
    <property type="entry name" value="F85921"/>
</dbReference>
<dbReference type="PIR" id="F91076">
    <property type="entry name" value="F91076"/>
</dbReference>
<dbReference type="RefSeq" id="NP_311609.1">
    <property type="nucleotide sequence ID" value="NC_002695.1"/>
</dbReference>
<dbReference type="RefSeq" id="WP_001299100.1">
    <property type="nucleotide sequence ID" value="NZ_VOAI01000003.1"/>
</dbReference>
<dbReference type="SMR" id="P0A701"/>
<dbReference type="STRING" id="155864.Z4035"/>
<dbReference type="GeneID" id="914696"/>
<dbReference type="GeneID" id="93779282"/>
<dbReference type="KEGG" id="ece:Z4035"/>
<dbReference type="KEGG" id="ecs:ECs_3582"/>
<dbReference type="PATRIC" id="fig|386585.9.peg.3744"/>
<dbReference type="eggNOG" id="COG0375">
    <property type="taxonomic scope" value="Bacteria"/>
</dbReference>
<dbReference type="HOGENOM" id="CLU_126929_0_0_6"/>
<dbReference type="Proteomes" id="UP000000558">
    <property type="component" value="Chromosome"/>
</dbReference>
<dbReference type="Proteomes" id="UP000002519">
    <property type="component" value="Chromosome"/>
</dbReference>
<dbReference type="GO" id="GO:0016151">
    <property type="term" value="F:nickel cation binding"/>
    <property type="evidence" value="ECO:0007669"/>
    <property type="project" value="UniProtKB-UniRule"/>
</dbReference>
<dbReference type="GO" id="GO:0008270">
    <property type="term" value="F:zinc ion binding"/>
    <property type="evidence" value="ECO:0007669"/>
    <property type="project" value="UniProtKB-UniRule"/>
</dbReference>
<dbReference type="GO" id="GO:0051604">
    <property type="term" value="P:protein maturation"/>
    <property type="evidence" value="ECO:0007669"/>
    <property type="project" value="InterPro"/>
</dbReference>
<dbReference type="GO" id="GO:0036211">
    <property type="term" value="P:protein modification process"/>
    <property type="evidence" value="ECO:0007669"/>
    <property type="project" value="UniProtKB-UniRule"/>
</dbReference>
<dbReference type="FunFam" id="3.30.2320.80:FF:000001">
    <property type="entry name" value="Hydrogenase maturation factor HypA"/>
    <property type="match status" value="1"/>
</dbReference>
<dbReference type="Gene3D" id="3.30.2320.80">
    <property type="match status" value="1"/>
</dbReference>
<dbReference type="HAMAP" id="MF_00213">
    <property type="entry name" value="HypA_HybF"/>
    <property type="match status" value="1"/>
</dbReference>
<dbReference type="InterPro" id="IPR020538">
    <property type="entry name" value="Hydgase_Ni_incorp_HypA/HybF_CS"/>
</dbReference>
<dbReference type="InterPro" id="IPR000688">
    <property type="entry name" value="HypA/HybF"/>
</dbReference>
<dbReference type="NCBIfam" id="TIGR00100">
    <property type="entry name" value="hypA"/>
    <property type="match status" value="1"/>
</dbReference>
<dbReference type="NCBIfam" id="NF002979">
    <property type="entry name" value="PRK03681.1"/>
    <property type="match status" value="1"/>
</dbReference>
<dbReference type="NCBIfam" id="NF009046">
    <property type="entry name" value="PRK12380.1"/>
    <property type="match status" value="1"/>
</dbReference>
<dbReference type="PANTHER" id="PTHR34535">
    <property type="entry name" value="HYDROGENASE MATURATION FACTOR HYPA"/>
    <property type="match status" value="1"/>
</dbReference>
<dbReference type="PANTHER" id="PTHR34535:SF3">
    <property type="entry name" value="HYDROGENASE MATURATION FACTOR HYPA"/>
    <property type="match status" value="1"/>
</dbReference>
<dbReference type="Pfam" id="PF01155">
    <property type="entry name" value="HypA"/>
    <property type="match status" value="1"/>
</dbReference>
<dbReference type="PIRSF" id="PIRSF004761">
    <property type="entry name" value="Hydrgn_mat_HypA"/>
    <property type="match status" value="1"/>
</dbReference>
<dbReference type="PROSITE" id="PS01249">
    <property type="entry name" value="HYPA"/>
    <property type="match status" value="1"/>
</dbReference>
<sequence>MHEITLCQRALELIEQQAAKHGAKRVTGVWLKIGAFSCVETSSLAFCFDLVCRGSVAEGCKLHLEEQEAECWCETCQQYVTLLTQRVRRCPQCHGDMLQIVADDGLQIRRIEIDQE</sequence>
<gene>
    <name evidence="1" type="primary">hypA</name>
    <name type="ordered locus">Z4035</name>
    <name type="ordered locus">ECs3582</name>
</gene>
<protein>
    <recommendedName>
        <fullName evidence="1">Hydrogenase maturation factor HypA</fullName>
    </recommendedName>
</protein>
<evidence type="ECO:0000255" key="1">
    <source>
        <dbReference type="HAMAP-Rule" id="MF_00213"/>
    </source>
</evidence>
<evidence type="ECO:0000305" key="2"/>
<keyword id="KW-0479">Metal-binding</keyword>
<keyword id="KW-0533">Nickel</keyword>
<keyword id="KW-1185">Reference proteome</keyword>
<keyword id="KW-0862">Zinc</keyword>
<comment type="function">
    <text evidence="1">Involved in the maturation of [NiFe] hydrogenases. Required for nickel insertion into the metal center of the hydrogenase.</text>
</comment>
<comment type="similarity">
    <text evidence="1 2">Belongs to the HypA/HybF family.</text>
</comment>
<accession>P0A701</accession>
<accession>P24189</accession>
<organism>
    <name type="scientific">Escherichia coli O157:H7</name>
    <dbReference type="NCBI Taxonomy" id="83334"/>
    <lineage>
        <taxon>Bacteria</taxon>
        <taxon>Pseudomonadati</taxon>
        <taxon>Pseudomonadota</taxon>
        <taxon>Gammaproteobacteria</taxon>
        <taxon>Enterobacterales</taxon>
        <taxon>Enterobacteriaceae</taxon>
        <taxon>Escherichia</taxon>
    </lineage>
</organism>
<name>HYPA_ECO57</name>
<reference key="1">
    <citation type="journal article" date="2001" name="Nature">
        <title>Genome sequence of enterohaemorrhagic Escherichia coli O157:H7.</title>
        <authorList>
            <person name="Perna N.T."/>
            <person name="Plunkett G. III"/>
            <person name="Burland V."/>
            <person name="Mau B."/>
            <person name="Glasner J.D."/>
            <person name="Rose D.J."/>
            <person name="Mayhew G.F."/>
            <person name="Evans P.S."/>
            <person name="Gregor J."/>
            <person name="Kirkpatrick H.A."/>
            <person name="Posfai G."/>
            <person name="Hackett J."/>
            <person name="Klink S."/>
            <person name="Boutin A."/>
            <person name="Shao Y."/>
            <person name="Miller L."/>
            <person name="Grotbeck E.J."/>
            <person name="Davis N.W."/>
            <person name="Lim A."/>
            <person name="Dimalanta E.T."/>
            <person name="Potamousis K."/>
            <person name="Apodaca J."/>
            <person name="Anantharaman T.S."/>
            <person name="Lin J."/>
            <person name="Yen G."/>
            <person name="Schwartz D.C."/>
            <person name="Welch R.A."/>
            <person name="Blattner F.R."/>
        </authorList>
    </citation>
    <scope>NUCLEOTIDE SEQUENCE [LARGE SCALE GENOMIC DNA]</scope>
    <source>
        <strain>O157:H7 / EDL933 / ATCC 700927 / EHEC</strain>
    </source>
</reference>
<reference key="2">
    <citation type="journal article" date="2001" name="DNA Res.">
        <title>Complete genome sequence of enterohemorrhagic Escherichia coli O157:H7 and genomic comparison with a laboratory strain K-12.</title>
        <authorList>
            <person name="Hayashi T."/>
            <person name="Makino K."/>
            <person name="Ohnishi M."/>
            <person name="Kurokawa K."/>
            <person name="Ishii K."/>
            <person name="Yokoyama K."/>
            <person name="Han C.-G."/>
            <person name="Ohtsubo E."/>
            <person name="Nakayama K."/>
            <person name="Murata T."/>
            <person name="Tanaka M."/>
            <person name="Tobe T."/>
            <person name="Iida T."/>
            <person name="Takami H."/>
            <person name="Honda T."/>
            <person name="Sasakawa C."/>
            <person name="Ogasawara N."/>
            <person name="Yasunaga T."/>
            <person name="Kuhara S."/>
            <person name="Shiba T."/>
            <person name="Hattori M."/>
            <person name="Shinagawa H."/>
        </authorList>
    </citation>
    <scope>NUCLEOTIDE SEQUENCE [LARGE SCALE GENOMIC DNA]</scope>
    <source>
        <strain>O157:H7 / Sakai / RIMD 0509952 / EHEC</strain>
    </source>
</reference>
<proteinExistence type="inferred from homology"/>
<feature type="chain" id="PRO_0000129058" description="Hydrogenase maturation factor HypA">
    <location>
        <begin position="1"/>
        <end position="116"/>
    </location>
</feature>
<feature type="binding site" evidence="1">
    <location>
        <position position="2"/>
    </location>
    <ligand>
        <name>Ni(2+)</name>
        <dbReference type="ChEBI" id="CHEBI:49786"/>
    </ligand>
</feature>
<feature type="binding site" evidence="1">
    <location>
        <position position="73"/>
    </location>
    <ligand>
        <name>Zn(2+)</name>
        <dbReference type="ChEBI" id="CHEBI:29105"/>
    </ligand>
</feature>
<feature type="binding site" evidence="1">
    <location>
        <position position="76"/>
    </location>
    <ligand>
        <name>Zn(2+)</name>
        <dbReference type="ChEBI" id="CHEBI:29105"/>
    </ligand>
</feature>
<feature type="binding site" evidence="1">
    <location>
        <position position="90"/>
    </location>
    <ligand>
        <name>Zn(2+)</name>
        <dbReference type="ChEBI" id="CHEBI:29105"/>
    </ligand>
</feature>
<feature type="binding site" evidence="1">
    <location>
        <position position="93"/>
    </location>
    <ligand>
        <name>Zn(2+)</name>
        <dbReference type="ChEBI" id="CHEBI:29105"/>
    </ligand>
</feature>